<reference key="1">
    <citation type="submission" date="2006-10" db="EMBL/GenBank/DDBJ databases">
        <title>Complete sequence of Syntrophobacter fumaroxidans MPOB.</title>
        <authorList>
            <consortium name="US DOE Joint Genome Institute"/>
            <person name="Copeland A."/>
            <person name="Lucas S."/>
            <person name="Lapidus A."/>
            <person name="Barry K."/>
            <person name="Detter J.C."/>
            <person name="Glavina del Rio T."/>
            <person name="Hammon N."/>
            <person name="Israni S."/>
            <person name="Pitluck S."/>
            <person name="Goltsman E.G."/>
            <person name="Martinez M."/>
            <person name="Schmutz J."/>
            <person name="Larimer F."/>
            <person name="Land M."/>
            <person name="Hauser L."/>
            <person name="Kyrpides N."/>
            <person name="Kim E."/>
            <person name="Boone D.R."/>
            <person name="Brockman F."/>
            <person name="Culley D."/>
            <person name="Ferry J."/>
            <person name="Gunsalus R."/>
            <person name="McInerney M.J."/>
            <person name="Morrison M."/>
            <person name="Plugge C."/>
            <person name="Rohlin L."/>
            <person name="Scholten J."/>
            <person name="Sieber J."/>
            <person name="Stams A.J.M."/>
            <person name="Worm P."/>
            <person name="Henstra A.M."/>
            <person name="Richardson P."/>
        </authorList>
    </citation>
    <scope>NUCLEOTIDE SEQUENCE [LARGE SCALE GENOMIC DNA]</scope>
    <source>
        <strain>DSM 10017 / MPOB</strain>
    </source>
</reference>
<gene>
    <name type="ordered locus">Sfum_2137</name>
</gene>
<evidence type="ECO:0000255" key="1">
    <source>
        <dbReference type="HAMAP-Rule" id="MF_01600"/>
    </source>
</evidence>
<dbReference type="EMBL" id="CP000478">
    <property type="protein sequence ID" value="ABK17819.1"/>
    <property type="molecule type" value="Genomic_DNA"/>
</dbReference>
<dbReference type="RefSeq" id="WP_011698988.1">
    <property type="nucleotide sequence ID" value="NC_008554.1"/>
</dbReference>
<dbReference type="STRING" id="335543.Sfum_2137"/>
<dbReference type="KEGG" id="sfu:Sfum_2137"/>
<dbReference type="eggNOG" id="COG1615">
    <property type="taxonomic scope" value="Bacteria"/>
</dbReference>
<dbReference type="HOGENOM" id="CLU_007733_0_0_7"/>
<dbReference type="InParanoid" id="A0LK67"/>
<dbReference type="OrthoDB" id="9763654at2"/>
<dbReference type="Proteomes" id="UP000001784">
    <property type="component" value="Chromosome"/>
</dbReference>
<dbReference type="GO" id="GO:0005576">
    <property type="term" value="C:extracellular region"/>
    <property type="evidence" value="ECO:0007669"/>
    <property type="project" value="TreeGrafter"/>
</dbReference>
<dbReference type="GO" id="GO:0005886">
    <property type="term" value="C:plasma membrane"/>
    <property type="evidence" value="ECO:0007669"/>
    <property type="project" value="UniProtKB-SubCell"/>
</dbReference>
<dbReference type="HAMAP" id="MF_01600">
    <property type="entry name" value="UPF0182"/>
    <property type="match status" value="1"/>
</dbReference>
<dbReference type="InterPro" id="IPR005372">
    <property type="entry name" value="UPF0182"/>
</dbReference>
<dbReference type="PANTHER" id="PTHR39344">
    <property type="entry name" value="UPF0182 PROTEIN SLL1060"/>
    <property type="match status" value="1"/>
</dbReference>
<dbReference type="PANTHER" id="PTHR39344:SF1">
    <property type="entry name" value="UPF0182 PROTEIN SLL1060"/>
    <property type="match status" value="1"/>
</dbReference>
<dbReference type="Pfam" id="PF03699">
    <property type="entry name" value="UPF0182"/>
    <property type="match status" value="1"/>
</dbReference>
<name>Y2137_SYNFM</name>
<accession>A0LK67</accession>
<comment type="subcellular location">
    <subcellularLocation>
        <location evidence="1">Cell membrane</location>
        <topology evidence="1">Multi-pass membrane protein</topology>
    </subcellularLocation>
</comment>
<comment type="similarity">
    <text evidence="1">Belongs to the UPF0182 family.</text>
</comment>
<sequence>MNRWARWPLIILIGILGISAVVILSSLASVDYLINIWWFDSLGYGLYYWLRLLYRYIVFGAVTLLFFLIFFLNFWVASRYVGNVPPAPSKFRIAALDRYLNVVRMFRSGSLWVYTPLSLILAVIIALPIFEKWEAFLLYVAGPKTGVPDPVYGKDISYYLFSYPIYTLVQRRLLIAFVLLLVGLVALYLLERRLLARQEQPIPAGARLHLSILILLIFLIETWDYVLQRYELLYSEAHMPLFYGGGFVEMYVIWALIWLTLFFLMGTAFSMIAFIQTRKGLKPLVVFAVGFVLVLGLRYSAFLPATVEKLVVKPNEVSRERDFIVNNIKATLSAYNLNTVQTRDFTPARTAADVASPKVKAQLRNIPVWDGELLDDVYKQLQQLRTYYTFPSVDVARYTVNGMPQQVFLSVRELDYTLIPEAARNWVNEHLSYTHGYGAVMTPASQGGDEPMTWFIKGIPPESEYGFRIEQPGVYIGLGSYTYVIAPNDAGEIDYPKGNSNTMVSYKAEDGVPLSSFLRRILFAYHFGDRNLLFTTKTTPDSKILFRRNLLERIRVLTPFLLLDGDPYAVVTPGKLYWIQDAYTTSEFYPGATPTLWGRDRFNYIRNSVKIVVDAFSGKVEYYVFEPGDPIVRAYSRIYPGVFRNADQMPPELKAQVRYPQDIFEIQMNIYAKYQQTDPEVYYQQEDMWEPAKTFQDRTPVTIKPYYVTLDLIDPSRFDFLLLAPMSPKGRDNLRALALAGSDPPHYGKIIVYNFPKGELIYGPSQIYALINQDTRISEQFTLWDQVGSQVARGKMIILPISNMILYIQPVYLKSATKLKIPELKRIIMSQGQIVVMEPSLEEAYAKLQERIKLEIDRVDKRFAPLLPGSPAGR</sequence>
<feature type="chain" id="PRO_5000166310" description="UPF0182 protein Sfum_2137">
    <location>
        <begin position="1"/>
        <end position="874"/>
    </location>
</feature>
<feature type="transmembrane region" description="Helical" evidence="1">
    <location>
        <begin position="7"/>
        <end position="27"/>
    </location>
</feature>
<feature type="transmembrane region" description="Helical" evidence="1">
    <location>
        <begin position="57"/>
        <end position="77"/>
    </location>
</feature>
<feature type="transmembrane region" description="Helical" evidence="1">
    <location>
        <begin position="110"/>
        <end position="130"/>
    </location>
</feature>
<feature type="transmembrane region" description="Helical" evidence="1">
    <location>
        <begin position="171"/>
        <end position="191"/>
    </location>
</feature>
<feature type="transmembrane region" description="Helical" evidence="1">
    <location>
        <begin position="208"/>
        <end position="228"/>
    </location>
</feature>
<feature type="transmembrane region" description="Helical" evidence="1">
    <location>
        <begin position="252"/>
        <end position="272"/>
    </location>
</feature>
<feature type="transmembrane region" description="Helical" evidence="1">
    <location>
        <begin position="283"/>
        <end position="303"/>
    </location>
</feature>
<organism>
    <name type="scientific">Syntrophobacter fumaroxidans (strain DSM 10017 / MPOB)</name>
    <dbReference type="NCBI Taxonomy" id="335543"/>
    <lineage>
        <taxon>Bacteria</taxon>
        <taxon>Pseudomonadati</taxon>
        <taxon>Thermodesulfobacteriota</taxon>
        <taxon>Syntrophobacteria</taxon>
        <taxon>Syntrophobacterales</taxon>
        <taxon>Syntrophobacteraceae</taxon>
        <taxon>Syntrophobacter</taxon>
    </lineage>
</organism>
<keyword id="KW-1003">Cell membrane</keyword>
<keyword id="KW-0472">Membrane</keyword>
<keyword id="KW-1185">Reference proteome</keyword>
<keyword id="KW-0812">Transmembrane</keyword>
<keyword id="KW-1133">Transmembrane helix</keyword>
<protein>
    <recommendedName>
        <fullName evidence="1">UPF0182 protein Sfum_2137</fullName>
    </recommendedName>
</protein>
<proteinExistence type="inferred from homology"/>